<keyword id="KW-0687">Ribonucleoprotein</keyword>
<keyword id="KW-0689">Ribosomal protein</keyword>
<sequence length="142" mass="16019">MKTFTAKPETVKRDWYVVDATGKTLGRLATELARRLRGKHKAEYTPHVDTGDYIIVLNADKVAVTGNKRTDKVYYHHTGHIGGIKQATFEEMIARRPERVIEIAVKGMLPKGPLGRAMFRKLKVYAGNEHNHAAQQPQVLDI</sequence>
<organism>
    <name type="scientific">Salmonella typhi</name>
    <dbReference type="NCBI Taxonomy" id="90370"/>
    <lineage>
        <taxon>Bacteria</taxon>
        <taxon>Pseudomonadati</taxon>
        <taxon>Pseudomonadota</taxon>
        <taxon>Gammaproteobacteria</taxon>
        <taxon>Enterobacterales</taxon>
        <taxon>Enterobacteriaceae</taxon>
        <taxon>Salmonella</taxon>
    </lineage>
</organism>
<protein>
    <recommendedName>
        <fullName evidence="1">Large ribosomal subunit protein uL13</fullName>
    </recommendedName>
    <alternativeName>
        <fullName evidence="2">50S ribosomal protein L13</fullName>
    </alternativeName>
</protein>
<gene>
    <name evidence="1" type="primary">rplM</name>
    <name type="ordered locus">STY3525</name>
    <name type="ordered locus">t3261</name>
</gene>
<comment type="function">
    <text evidence="1">This protein is one of the early assembly proteins of the 50S ribosomal subunit, although it is not seen to bind rRNA by itself. It is important during the early stages of 50S assembly.</text>
</comment>
<comment type="subunit">
    <text evidence="1">Part of the 50S ribosomal subunit.</text>
</comment>
<comment type="similarity">
    <text evidence="1">Belongs to the universal ribosomal protein uL13 family.</text>
</comment>
<reference key="1">
    <citation type="journal article" date="2001" name="Nature">
        <title>Complete genome sequence of a multiple drug resistant Salmonella enterica serovar Typhi CT18.</title>
        <authorList>
            <person name="Parkhill J."/>
            <person name="Dougan G."/>
            <person name="James K.D."/>
            <person name="Thomson N.R."/>
            <person name="Pickard D."/>
            <person name="Wain J."/>
            <person name="Churcher C.M."/>
            <person name="Mungall K.L."/>
            <person name="Bentley S.D."/>
            <person name="Holden M.T.G."/>
            <person name="Sebaihia M."/>
            <person name="Baker S."/>
            <person name="Basham D."/>
            <person name="Brooks K."/>
            <person name="Chillingworth T."/>
            <person name="Connerton P."/>
            <person name="Cronin A."/>
            <person name="Davis P."/>
            <person name="Davies R.M."/>
            <person name="Dowd L."/>
            <person name="White N."/>
            <person name="Farrar J."/>
            <person name="Feltwell T."/>
            <person name="Hamlin N."/>
            <person name="Haque A."/>
            <person name="Hien T.T."/>
            <person name="Holroyd S."/>
            <person name="Jagels K."/>
            <person name="Krogh A."/>
            <person name="Larsen T.S."/>
            <person name="Leather S."/>
            <person name="Moule S."/>
            <person name="O'Gaora P."/>
            <person name="Parry C."/>
            <person name="Quail M.A."/>
            <person name="Rutherford K.M."/>
            <person name="Simmonds M."/>
            <person name="Skelton J."/>
            <person name="Stevens K."/>
            <person name="Whitehead S."/>
            <person name="Barrell B.G."/>
        </authorList>
    </citation>
    <scope>NUCLEOTIDE SEQUENCE [LARGE SCALE GENOMIC DNA]</scope>
    <source>
        <strain>CT18</strain>
    </source>
</reference>
<reference key="2">
    <citation type="journal article" date="2003" name="J. Bacteriol.">
        <title>Comparative genomics of Salmonella enterica serovar Typhi strains Ty2 and CT18.</title>
        <authorList>
            <person name="Deng W."/>
            <person name="Liou S.-R."/>
            <person name="Plunkett G. III"/>
            <person name="Mayhew G.F."/>
            <person name="Rose D.J."/>
            <person name="Burland V."/>
            <person name="Kodoyianni V."/>
            <person name="Schwartz D.C."/>
            <person name="Blattner F.R."/>
        </authorList>
    </citation>
    <scope>NUCLEOTIDE SEQUENCE [LARGE SCALE GENOMIC DNA]</scope>
    <source>
        <strain>ATCC 700931 / Ty2</strain>
    </source>
</reference>
<evidence type="ECO:0000255" key="1">
    <source>
        <dbReference type="HAMAP-Rule" id="MF_01366"/>
    </source>
</evidence>
<evidence type="ECO:0000305" key="2"/>
<name>RL13_SALTI</name>
<feature type="chain" id="PRO_0000133747" description="Large ribosomal subunit protein uL13">
    <location>
        <begin position="1"/>
        <end position="142"/>
    </location>
</feature>
<dbReference type="EMBL" id="AL513382">
    <property type="protein sequence ID" value="CAD07861.1"/>
    <property type="molecule type" value="Genomic_DNA"/>
</dbReference>
<dbReference type="EMBL" id="AE014613">
    <property type="protein sequence ID" value="AAO70796.1"/>
    <property type="molecule type" value="Genomic_DNA"/>
</dbReference>
<dbReference type="RefSeq" id="NP_457722.1">
    <property type="nucleotide sequence ID" value="NC_003198.1"/>
</dbReference>
<dbReference type="RefSeq" id="WP_000847559.1">
    <property type="nucleotide sequence ID" value="NZ_WSUR01000003.1"/>
</dbReference>
<dbReference type="SMR" id="P0AA14"/>
<dbReference type="STRING" id="220341.gene:17587374"/>
<dbReference type="GeneID" id="89518067"/>
<dbReference type="KEGG" id="stt:t3261"/>
<dbReference type="KEGG" id="sty:STY3525"/>
<dbReference type="PATRIC" id="fig|220341.7.peg.3589"/>
<dbReference type="eggNOG" id="COG0102">
    <property type="taxonomic scope" value="Bacteria"/>
</dbReference>
<dbReference type="HOGENOM" id="CLU_082184_2_2_6"/>
<dbReference type="OMA" id="HKPIYTP"/>
<dbReference type="OrthoDB" id="9801330at2"/>
<dbReference type="Proteomes" id="UP000000541">
    <property type="component" value="Chromosome"/>
</dbReference>
<dbReference type="Proteomes" id="UP000002670">
    <property type="component" value="Chromosome"/>
</dbReference>
<dbReference type="GO" id="GO:0022625">
    <property type="term" value="C:cytosolic large ribosomal subunit"/>
    <property type="evidence" value="ECO:0007669"/>
    <property type="project" value="TreeGrafter"/>
</dbReference>
<dbReference type="GO" id="GO:0003729">
    <property type="term" value="F:mRNA binding"/>
    <property type="evidence" value="ECO:0007669"/>
    <property type="project" value="TreeGrafter"/>
</dbReference>
<dbReference type="GO" id="GO:0003735">
    <property type="term" value="F:structural constituent of ribosome"/>
    <property type="evidence" value="ECO:0007669"/>
    <property type="project" value="InterPro"/>
</dbReference>
<dbReference type="GO" id="GO:0017148">
    <property type="term" value="P:negative regulation of translation"/>
    <property type="evidence" value="ECO:0007669"/>
    <property type="project" value="TreeGrafter"/>
</dbReference>
<dbReference type="GO" id="GO:0006412">
    <property type="term" value="P:translation"/>
    <property type="evidence" value="ECO:0007669"/>
    <property type="project" value="UniProtKB-UniRule"/>
</dbReference>
<dbReference type="CDD" id="cd00392">
    <property type="entry name" value="Ribosomal_L13"/>
    <property type="match status" value="1"/>
</dbReference>
<dbReference type="FunFam" id="3.90.1180.10:FF:000001">
    <property type="entry name" value="50S ribosomal protein L13"/>
    <property type="match status" value="1"/>
</dbReference>
<dbReference type="Gene3D" id="3.90.1180.10">
    <property type="entry name" value="Ribosomal protein L13"/>
    <property type="match status" value="1"/>
</dbReference>
<dbReference type="HAMAP" id="MF_01366">
    <property type="entry name" value="Ribosomal_uL13"/>
    <property type="match status" value="1"/>
</dbReference>
<dbReference type="InterPro" id="IPR005822">
    <property type="entry name" value="Ribosomal_uL13"/>
</dbReference>
<dbReference type="InterPro" id="IPR005823">
    <property type="entry name" value="Ribosomal_uL13_bac-type"/>
</dbReference>
<dbReference type="InterPro" id="IPR023563">
    <property type="entry name" value="Ribosomal_uL13_CS"/>
</dbReference>
<dbReference type="InterPro" id="IPR036899">
    <property type="entry name" value="Ribosomal_uL13_sf"/>
</dbReference>
<dbReference type="NCBIfam" id="TIGR01066">
    <property type="entry name" value="rplM_bact"/>
    <property type="match status" value="1"/>
</dbReference>
<dbReference type="PANTHER" id="PTHR11545:SF2">
    <property type="entry name" value="LARGE RIBOSOMAL SUBUNIT PROTEIN UL13M"/>
    <property type="match status" value="1"/>
</dbReference>
<dbReference type="PANTHER" id="PTHR11545">
    <property type="entry name" value="RIBOSOMAL PROTEIN L13"/>
    <property type="match status" value="1"/>
</dbReference>
<dbReference type="Pfam" id="PF00572">
    <property type="entry name" value="Ribosomal_L13"/>
    <property type="match status" value="1"/>
</dbReference>
<dbReference type="PIRSF" id="PIRSF002181">
    <property type="entry name" value="Ribosomal_L13"/>
    <property type="match status" value="1"/>
</dbReference>
<dbReference type="SUPFAM" id="SSF52161">
    <property type="entry name" value="Ribosomal protein L13"/>
    <property type="match status" value="1"/>
</dbReference>
<dbReference type="PROSITE" id="PS00783">
    <property type="entry name" value="RIBOSOMAL_L13"/>
    <property type="match status" value="1"/>
</dbReference>
<accession>P0AA14</accession>
<accession>P02410</accession>
<proteinExistence type="inferred from homology"/>